<comment type="function">
    <text evidence="1">Transcription factor required for differentiation of embryonic stem cells (ESCs) into primordial germ cells.</text>
</comment>
<comment type="subcellular location">
    <subcellularLocation>
        <location evidence="3">Nucleus</location>
    </subcellularLocation>
</comment>
<comment type="tissue specificity">
    <text>Highly expressed in placenta. Lower levels in testis, epididymis, ovary and skeletal muscle.</text>
</comment>
<comment type="developmental stage">
    <text>Expressed during embryogenesis and in adult reproductive tissue and skeletal muscle.</text>
</comment>
<feature type="chain" id="PRO_0000049244" description="Homeobox protein Rhox5">
    <location>
        <begin position="1"/>
        <end position="211"/>
    </location>
</feature>
<feature type="DNA-binding region" description="Homeobox; atypical">
    <location>
        <begin position="119"/>
        <end position="176"/>
    </location>
</feature>
<feature type="region of interest" description="Disordered" evidence="2">
    <location>
        <begin position="38"/>
        <end position="129"/>
    </location>
</feature>
<feature type="compositionally biased region" description="Gly residues" evidence="2">
    <location>
        <begin position="52"/>
        <end position="62"/>
    </location>
</feature>
<feature type="compositionally biased region" description="Gly residues" evidence="2">
    <location>
        <begin position="70"/>
        <end position="84"/>
    </location>
</feature>
<feature type="compositionally biased region" description="Basic and acidic residues" evidence="2">
    <location>
        <begin position="102"/>
        <end position="119"/>
    </location>
</feature>
<name>RHOX5_RAT</name>
<organism>
    <name type="scientific">Rattus norvegicus</name>
    <name type="common">Rat</name>
    <dbReference type="NCBI Taxonomy" id="10116"/>
    <lineage>
        <taxon>Eukaryota</taxon>
        <taxon>Metazoa</taxon>
        <taxon>Chordata</taxon>
        <taxon>Craniata</taxon>
        <taxon>Vertebrata</taxon>
        <taxon>Euteleostomi</taxon>
        <taxon>Mammalia</taxon>
        <taxon>Eutheria</taxon>
        <taxon>Euarchontoglires</taxon>
        <taxon>Glires</taxon>
        <taxon>Rodentia</taxon>
        <taxon>Myomorpha</taxon>
        <taxon>Muroidea</taxon>
        <taxon>Muridae</taxon>
        <taxon>Murinae</taxon>
        <taxon>Rattus</taxon>
    </lineage>
</organism>
<proteinExistence type="evidence at transcript level"/>
<keyword id="KW-0221">Differentiation</keyword>
<keyword id="KW-0238">DNA-binding</keyword>
<keyword id="KW-0371">Homeobox</keyword>
<keyword id="KW-0539">Nucleus</keyword>
<keyword id="KW-1185">Reference proteome</keyword>
<keyword id="KW-0804">Transcription</keyword>
<keyword id="KW-0805">Transcription regulation</keyword>
<accession>Q63630</accession>
<accession>P97736</accession>
<accession>Q4TU77</accession>
<dbReference type="EMBL" id="U52034">
    <property type="protein sequence ID" value="AAC52665.1"/>
    <property type="molecule type" value="Genomic_DNA"/>
</dbReference>
<dbReference type="EMBL" id="DQ058653">
    <property type="protein sequence ID" value="AAY58264.1"/>
    <property type="molecule type" value="mRNA"/>
</dbReference>
<dbReference type="RefSeq" id="NP_071511.1">
    <property type="nucleotide sequence ID" value="NM_022175.1"/>
</dbReference>
<dbReference type="SMR" id="Q63630"/>
<dbReference type="STRING" id="10116.ENSRNOP00000064947"/>
<dbReference type="PhosphoSitePlus" id="Q63630"/>
<dbReference type="PaxDb" id="10116-ENSRNOP00000064947"/>
<dbReference type="GeneID" id="24631"/>
<dbReference type="KEGG" id="rno:24631"/>
<dbReference type="AGR" id="RGD:3295"/>
<dbReference type="CTD" id="18617"/>
<dbReference type="RGD" id="3295">
    <property type="gene designation" value="Rhox5"/>
</dbReference>
<dbReference type="HOGENOM" id="CLU_1304540_0_0_1"/>
<dbReference type="InParanoid" id="Q63630"/>
<dbReference type="OrthoDB" id="9628312at2759"/>
<dbReference type="PRO" id="PR:Q63630"/>
<dbReference type="Proteomes" id="UP000002494">
    <property type="component" value="Chromosome X"/>
</dbReference>
<dbReference type="Bgee" id="ENSRNOG00000046548">
    <property type="expression patterns" value="Expressed in quadriceps femoris and 12 other cell types or tissues"/>
</dbReference>
<dbReference type="ExpressionAtlas" id="Q63630">
    <property type="expression patterns" value="baseline and differential"/>
</dbReference>
<dbReference type="GO" id="GO:0005634">
    <property type="term" value="C:nucleus"/>
    <property type="evidence" value="ECO:0000318"/>
    <property type="project" value="GO_Central"/>
</dbReference>
<dbReference type="GO" id="GO:0003677">
    <property type="term" value="F:DNA binding"/>
    <property type="evidence" value="ECO:0007669"/>
    <property type="project" value="UniProtKB-KW"/>
</dbReference>
<dbReference type="GO" id="GO:0001228">
    <property type="term" value="F:DNA-binding transcription activator activity, RNA polymerase II-specific"/>
    <property type="evidence" value="ECO:0000318"/>
    <property type="project" value="GO_Central"/>
</dbReference>
<dbReference type="GO" id="GO:0030154">
    <property type="term" value="P:cell differentiation"/>
    <property type="evidence" value="ECO:0007669"/>
    <property type="project" value="UniProtKB-KW"/>
</dbReference>
<dbReference type="GO" id="GO:0006357">
    <property type="term" value="P:regulation of transcription by RNA polymerase II"/>
    <property type="evidence" value="ECO:0000318"/>
    <property type="project" value="GO_Central"/>
</dbReference>
<dbReference type="PANTHER" id="PTHR47465:SF6">
    <property type="entry name" value="HOMEOBOX PROTEIN RHOX5"/>
    <property type="match status" value="1"/>
</dbReference>
<dbReference type="PANTHER" id="PTHR47465">
    <property type="entry name" value="MCG113260-RELATED-RELATED"/>
    <property type="match status" value="1"/>
</dbReference>
<reference key="1">
    <citation type="journal article" date="1996" name="J. Biol. Chem.">
        <title>The Pem homeobox gene. Androgen-dependent and -independent promoters and tissue-specific alternative RNA splicing.</title>
        <authorList>
            <person name="Maiti S."/>
            <person name="Doskow J."/>
            <person name="Li S."/>
            <person name="Nhim R.P."/>
            <person name="Lindsey J.S."/>
            <person name="Wilkinson M.F."/>
        </authorList>
    </citation>
    <scope>NUCLEOTIDE SEQUENCE [GENOMIC DNA]</scope>
    <source>
        <tissue>Fibroblast</tissue>
    </source>
</reference>
<reference key="2">
    <citation type="journal article" date="1996" name="Genomics">
        <title>The Pem homeobox gene: rapid evolution of the homeodomain, X chromosomal localization, and expression in reproductive tissue.</title>
        <authorList>
            <person name="Maiti S."/>
            <person name="Doskow J."/>
            <person name="Sutton K."/>
            <person name="Nhim R.P."/>
            <person name="Lawlor D.A."/>
            <person name="Levan K."/>
            <person name="Lindsey J.S."/>
            <person name="Wilkinson M.F."/>
        </authorList>
    </citation>
    <scope>NUCLEOTIDE SEQUENCE [GENOMIC DNA]</scope>
    <source>
        <tissue>Fibroblast</tissue>
    </source>
</reference>
<reference key="3">
    <citation type="submission" date="2005-06" db="EMBL/GenBank/DDBJ databases">
        <title>Rhox: a new homeobox gene cluster on the rat X chromosome.</title>
        <authorList>
            <person name="Maclean J.A. II"/>
            <person name="Bruce S.R."/>
            <person name="Wilkinson M.F."/>
        </authorList>
    </citation>
    <scope>NUCLEOTIDE SEQUENCE [MRNA]</scope>
    <source>
        <strain>Sprague-Dawley</strain>
    </source>
</reference>
<gene>
    <name type="primary">Rhox5</name>
    <name type="synonym">Pem</name>
</gene>
<protein>
    <recommendedName>
        <fullName>Homeobox protein Rhox5</fullName>
    </recommendedName>
    <alternativeName>
        <fullName>Homeobox protein Pem</fullName>
    </alternativeName>
    <alternativeName>
        <fullName>Placenta and embryonic expression protein</fullName>
    </alternativeName>
    <alternativeName>
        <fullName>Reproductive homeobox on chromosome X 5</fullName>
    </alternativeName>
</protein>
<sequence length="211" mass="22850">MEAQGSSHDISRLLCLGVKEDSEEQHGQYLGDVKAEAFFQAGEGRDEKGAQGQPGEGAVGTEGEGEELNGGEGHFGPGVPGPVGEGDKDGGTRASGMEEEQHEPVAEGTESVKSEDKQMPLRRPGSTQRRLAELERILLSSGSSSGGRSLIDGWISVCPECRNWFKIRRAAYRRNRRRRTPIPEHFRATSGCPACLGARWGVRCPFATPRF</sequence>
<evidence type="ECO:0000250" key="1">
    <source>
        <dbReference type="UniProtKB" id="P52651"/>
    </source>
</evidence>
<evidence type="ECO:0000256" key="2">
    <source>
        <dbReference type="SAM" id="MobiDB-lite"/>
    </source>
</evidence>
<evidence type="ECO:0000305" key="3"/>